<proteinExistence type="inferred from homology"/>
<gene>
    <name evidence="1" type="primary">gH</name>
</gene>
<keyword id="KW-1169">Fusion of virus membrane with host cell membrane</keyword>
<keyword id="KW-1168">Fusion of virus membrane with host membrane</keyword>
<keyword id="KW-0325">Glycoprotein</keyword>
<keyword id="KW-1032">Host cell membrane</keyword>
<keyword id="KW-1039">Host endosome</keyword>
<keyword id="KW-1043">Host membrane</keyword>
<keyword id="KW-0472">Membrane</keyword>
<keyword id="KW-0730">Sialic acid</keyword>
<keyword id="KW-0732">Signal</keyword>
<keyword id="KW-0812">Transmembrane</keyword>
<keyword id="KW-1133">Transmembrane helix</keyword>
<keyword id="KW-0261">Viral envelope protein</keyword>
<keyword id="KW-1162">Viral penetration into host cytoplasm</keyword>
<keyword id="KW-0946">Virion</keyword>
<keyword id="KW-1160">Virus entry into host cell</keyword>
<organism>
    <name type="scientific">Suid herpesvirus 1 (strain Rice)</name>
    <name type="common">SuHV-1</name>
    <name type="synonym">Pseudorabies virus (strain Rice)</name>
    <dbReference type="NCBI Taxonomy" id="10350"/>
    <lineage>
        <taxon>Viruses</taxon>
        <taxon>Duplodnaviria</taxon>
        <taxon>Heunggongvirae</taxon>
        <taxon>Peploviricota</taxon>
        <taxon>Herviviricetes</taxon>
        <taxon>Herpesvirales</taxon>
        <taxon>Orthoherpesviridae</taxon>
        <taxon>Alphaherpesvirinae</taxon>
        <taxon>Varicellovirus</taxon>
        <taxon>Varicellovirus suidalpha1</taxon>
        <taxon>Suid herpesvirus 1</taxon>
    </lineage>
</organism>
<organismHost>
    <name type="scientific">Sus scrofa</name>
    <name type="common">Pig</name>
    <dbReference type="NCBI Taxonomy" id="9823"/>
</organismHost>
<name>GH_SUHVR</name>
<accession>P27593</accession>
<reference key="1">
    <citation type="submission" date="1991-04" db="EMBL/GenBank/DDBJ databases">
        <authorList>
            <person name="Meyer A.L."/>
            <person name="Petrovskis E.A."/>
            <person name="Thomsen D.R."/>
            <person name="Post L.E."/>
        </authorList>
    </citation>
    <scope>NUCLEOTIDE SEQUENCE [GENOMIC DNA]</scope>
</reference>
<evidence type="ECO:0000255" key="1">
    <source>
        <dbReference type="HAMAP-Rule" id="MF_04033"/>
    </source>
</evidence>
<dbReference type="EMBL" id="X58868">
    <property type="protein sequence ID" value="CAA41678.1"/>
    <property type="molecule type" value="Genomic_DNA"/>
</dbReference>
<dbReference type="PIR" id="S15478">
    <property type="entry name" value="S15478"/>
</dbReference>
<dbReference type="SMR" id="P27593"/>
<dbReference type="GlyCosmos" id="P27593">
    <property type="glycosylation" value="5 sites, No reported glycans"/>
</dbReference>
<dbReference type="GO" id="GO:0044175">
    <property type="term" value="C:host cell endosome membrane"/>
    <property type="evidence" value="ECO:0007669"/>
    <property type="project" value="UniProtKB-SubCell"/>
</dbReference>
<dbReference type="GO" id="GO:0020002">
    <property type="term" value="C:host cell plasma membrane"/>
    <property type="evidence" value="ECO:0007669"/>
    <property type="project" value="UniProtKB-SubCell"/>
</dbReference>
<dbReference type="GO" id="GO:0016020">
    <property type="term" value="C:membrane"/>
    <property type="evidence" value="ECO:0007669"/>
    <property type="project" value="UniProtKB-KW"/>
</dbReference>
<dbReference type="GO" id="GO:0019031">
    <property type="term" value="C:viral envelope"/>
    <property type="evidence" value="ECO:0007669"/>
    <property type="project" value="UniProtKB-KW"/>
</dbReference>
<dbReference type="GO" id="GO:0055036">
    <property type="term" value="C:virion membrane"/>
    <property type="evidence" value="ECO:0007669"/>
    <property type="project" value="UniProtKB-SubCell"/>
</dbReference>
<dbReference type="GO" id="GO:0019064">
    <property type="term" value="P:fusion of virus membrane with host plasma membrane"/>
    <property type="evidence" value="ECO:0007669"/>
    <property type="project" value="UniProtKB-KW"/>
</dbReference>
<dbReference type="GO" id="GO:0046718">
    <property type="term" value="P:symbiont entry into host cell"/>
    <property type="evidence" value="ECO:0007669"/>
    <property type="project" value="UniProtKB-KW"/>
</dbReference>
<dbReference type="Gene3D" id="1.20.58.1340">
    <property type="match status" value="1"/>
</dbReference>
<dbReference type="Gene3D" id="3.30.500.50">
    <property type="match status" value="1"/>
</dbReference>
<dbReference type="Gene3D" id="2.60.40.3190">
    <property type="entry name" value="Herpesvirus glycoprotein H, C-terminal domain"/>
    <property type="match status" value="1"/>
</dbReference>
<dbReference type="HAMAP" id="MF_04033">
    <property type="entry name" value="HSV_GH"/>
    <property type="match status" value="1"/>
</dbReference>
<dbReference type="InterPro" id="IPR003493">
    <property type="entry name" value="Herpes_gH"/>
</dbReference>
<dbReference type="InterPro" id="IPR035305">
    <property type="entry name" value="Herpes_glycoH_C"/>
</dbReference>
<dbReference type="InterPro" id="IPR038172">
    <property type="entry name" value="Herpes_glycoH_C_sf"/>
</dbReference>
<dbReference type="Pfam" id="PF17488">
    <property type="entry name" value="Herpes_glycoH_C"/>
    <property type="match status" value="1"/>
</dbReference>
<sequence>MPASSVRLPLRLLTLAGLLALAGAAALARGAPQGGPPSPQGGPAPTAAPARGPTLFVLVGDGSAGFVFQLGGLGALNDTRIRGHLLGRYLVSYQVVPPPVSAWYFVQRPRERPRLSGPPSGAELVAFDAPGVRRTYTTAAVWPAEVAVLADAEARCPAAVFNVTLGEAFLGLRVALRSFLPLEVIISAERMRMIAPPALGAGLEPPGPPAGRFHVYTLGFLSDGAMHQTMRDVAAYVHESDDYLAQLSAAHAAALAAVVQPGPYYFYRAAVRLGVAAFVFSEAARRDRRASAPALLRVESDARLLSRLLMRAAGCPAGFAGLFDGRAERVPVAPADQLRAAWTFGEDPAPRLDLARATVAEAYRRSVRGKPFDQQALFFAVALLLRAGGPGDARETLLRTTAMCTAERAAAAAELTRAALSPAAAWNEPFSLLDVLSPCAVSLRRDLGGDATLANLGAAARLALAPAGAPGAAAATDEGAEEEEEDPVARAAPEIPAEALLALPLRGGASFVFTRRRPDCGPAYTLGGVDIANPLVLALVSNDSAACDYTDRMPESQHLPATDNPSVCVYCDCVFVRYSSAGTILETVLIESKDMEEQLMAGANSTIPSFNPTLHGGDVKALMLFPNGTVVDLLSFTSTRLAPVSPAYVVASVVGAAITVGILYALFKMLCSFSSEGYSRLINARS</sequence>
<protein>
    <recommendedName>
        <fullName evidence="1">Envelope glycoprotein H</fullName>
        <shortName evidence="1">gH</shortName>
    </recommendedName>
</protein>
<comment type="function">
    <text evidence="1">The heterodimer glycoprotein H-glycoprotein L is required for the fusion of viral and plasma membranes leading to virus entry into the host cell. Following initial binding to host receptor, membrane fusion is mediated by the fusion machinery composed of gB and the heterodimer gH/gL. May also be involved in the fusion between the virion envelope and the outer nuclear membrane during virion morphogenesis.</text>
</comment>
<comment type="subunit">
    <text evidence="1">Interacts with glycoprotein L (gL); this interaction is necessary for the correct processing and cell surface expression of gH. The heterodimer gH/gL seems to interact with gB trimers during fusion.</text>
</comment>
<comment type="subcellular location">
    <subcellularLocation>
        <location evidence="1">Virion membrane</location>
        <topology evidence="1">Single-pass type I membrane protein</topology>
    </subcellularLocation>
    <subcellularLocation>
        <location evidence="1">Host cell membrane</location>
        <topology evidence="1">Single-pass type I membrane protein</topology>
    </subcellularLocation>
    <subcellularLocation>
        <location evidence="1">Host endosome membrane</location>
        <topology evidence="1">Single-pass type I membrane protein</topology>
    </subcellularLocation>
    <text evidence="1">During virion morphogenesis, this protein probably accumulates in the endosomes and trans-Golgi where secondary envelopment occurs. It is probably transported to the cell surface from where it is endocytosed and directed to the trans-Golgi network (TGN).</text>
</comment>
<comment type="PTM">
    <text evidence="1">N-glycosylated, O-glycosylated, and sialylated.</text>
</comment>
<comment type="similarity">
    <text evidence="1">Belongs to the herpesviridae glycoprotein H family.</text>
</comment>
<feature type="signal peptide" evidence="1">
    <location>
        <begin position="1"/>
        <end position="24"/>
    </location>
</feature>
<feature type="chain" id="PRO_0000038251" description="Envelope glycoprotein H" evidence="1">
    <location>
        <begin position="25"/>
        <end position="686"/>
    </location>
</feature>
<feature type="topological domain" description="Virion surface" evidence="1">
    <location>
        <begin position="25"/>
        <end position="646"/>
    </location>
</feature>
<feature type="transmembrane region" description="Helical" evidence="1">
    <location>
        <begin position="647"/>
        <end position="667"/>
    </location>
</feature>
<feature type="topological domain" description="Intravirion" evidence="1">
    <location>
        <begin position="668"/>
        <end position="686"/>
    </location>
</feature>
<feature type="region of interest" description="Interaction with gL" evidence="1">
    <location>
        <begin position="157"/>
        <end position="217"/>
    </location>
</feature>
<feature type="glycosylation site" description="N-linked (GlcNAc...) asparagine; by host" evidence="1">
    <location>
        <position position="77"/>
    </location>
</feature>
<feature type="glycosylation site" description="N-linked (GlcNAc...) asparagine; by host" evidence="1">
    <location>
        <position position="162"/>
    </location>
</feature>
<feature type="glycosylation site" description="N-linked (GlcNAc...) asparagine; by host" evidence="1">
    <location>
        <position position="542"/>
    </location>
</feature>
<feature type="glycosylation site" description="N-linked (GlcNAc...) asparagine; by host" evidence="1">
    <location>
        <position position="604"/>
    </location>
</feature>
<feature type="glycosylation site" description="N-linked (GlcNAc...) asparagine; by host" evidence="1">
    <location>
        <position position="627"/>
    </location>
</feature>